<gene>
    <name evidence="1" type="primary">rpmA</name>
    <name type="ordered locus">NMC1848</name>
</gene>
<proteinExistence type="inferred from homology"/>
<protein>
    <recommendedName>
        <fullName evidence="1">Large ribosomal subunit protein bL27</fullName>
    </recommendedName>
    <alternativeName>
        <fullName evidence="3">50S ribosomal protein L27</fullName>
    </alternativeName>
</protein>
<evidence type="ECO:0000255" key="1">
    <source>
        <dbReference type="HAMAP-Rule" id="MF_00539"/>
    </source>
</evidence>
<evidence type="ECO:0000256" key="2">
    <source>
        <dbReference type="SAM" id="MobiDB-lite"/>
    </source>
</evidence>
<evidence type="ECO:0000305" key="3"/>
<dbReference type="EMBL" id="AM421808">
    <property type="protein sequence ID" value="CAM11014.1"/>
    <property type="molecule type" value="Genomic_DNA"/>
</dbReference>
<dbReference type="RefSeq" id="WP_002212328.1">
    <property type="nucleotide sequence ID" value="NC_008767.1"/>
</dbReference>
<dbReference type="SMR" id="A1KVV9"/>
<dbReference type="GeneID" id="93387415"/>
<dbReference type="KEGG" id="nmc:NMC1848"/>
<dbReference type="HOGENOM" id="CLU_095424_4_1_4"/>
<dbReference type="Proteomes" id="UP000002286">
    <property type="component" value="Chromosome"/>
</dbReference>
<dbReference type="GO" id="GO:0022625">
    <property type="term" value="C:cytosolic large ribosomal subunit"/>
    <property type="evidence" value="ECO:0007669"/>
    <property type="project" value="TreeGrafter"/>
</dbReference>
<dbReference type="GO" id="GO:0003735">
    <property type="term" value="F:structural constituent of ribosome"/>
    <property type="evidence" value="ECO:0007669"/>
    <property type="project" value="InterPro"/>
</dbReference>
<dbReference type="GO" id="GO:0006412">
    <property type="term" value="P:translation"/>
    <property type="evidence" value="ECO:0007669"/>
    <property type="project" value="UniProtKB-UniRule"/>
</dbReference>
<dbReference type="FunFam" id="2.40.50.100:FF:000001">
    <property type="entry name" value="50S ribosomal protein L27"/>
    <property type="match status" value="1"/>
</dbReference>
<dbReference type="Gene3D" id="2.40.50.100">
    <property type="match status" value="1"/>
</dbReference>
<dbReference type="HAMAP" id="MF_00539">
    <property type="entry name" value="Ribosomal_bL27"/>
    <property type="match status" value="1"/>
</dbReference>
<dbReference type="InterPro" id="IPR001684">
    <property type="entry name" value="Ribosomal_bL27"/>
</dbReference>
<dbReference type="InterPro" id="IPR018261">
    <property type="entry name" value="Ribosomal_bL27_CS"/>
</dbReference>
<dbReference type="NCBIfam" id="TIGR00062">
    <property type="entry name" value="L27"/>
    <property type="match status" value="1"/>
</dbReference>
<dbReference type="PANTHER" id="PTHR15893:SF0">
    <property type="entry name" value="LARGE RIBOSOMAL SUBUNIT PROTEIN BL27M"/>
    <property type="match status" value="1"/>
</dbReference>
<dbReference type="PANTHER" id="PTHR15893">
    <property type="entry name" value="RIBOSOMAL PROTEIN L27"/>
    <property type="match status" value="1"/>
</dbReference>
<dbReference type="Pfam" id="PF01016">
    <property type="entry name" value="Ribosomal_L27"/>
    <property type="match status" value="1"/>
</dbReference>
<dbReference type="PRINTS" id="PR00063">
    <property type="entry name" value="RIBOSOMALL27"/>
</dbReference>
<dbReference type="SUPFAM" id="SSF110324">
    <property type="entry name" value="Ribosomal L27 protein-like"/>
    <property type="match status" value="1"/>
</dbReference>
<dbReference type="PROSITE" id="PS00831">
    <property type="entry name" value="RIBOSOMAL_L27"/>
    <property type="match status" value="1"/>
</dbReference>
<reference key="1">
    <citation type="journal article" date="2007" name="PLoS Genet.">
        <title>Meningococcal genetic variation mechanisms viewed through comparative analysis of serogroup C strain FAM18.</title>
        <authorList>
            <person name="Bentley S.D."/>
            <person name="Vernikos G.S."/>
            <person name="Snyder L.A.S."/>
            <person name="Churcher C."/>
            <person name="Arrowsmith C."/>
            <person name="Chillingworth T."/>
            <person name="Cronin A."/>
            <person name="Davis P.H."/>
            <person name="Holroyd N.E."/>
            <person name="Jagels K."/>
            <person name="Maddison M."/>
            <person name="Moule S."/>
            <person name="Rabbinowitsch E."/>
            <person name="Sharp S."/>
            <person name="Unwin L."/>
            <person name="Whitehead S."/>
            <person name="Quail M.A."/>
            <person name="Achtman M."/>
            <person name="Barrell B.G."/>
            <person name="Saunders N.J."/>
            <person name="Parkhill J."/>
        </authorList>
    </citation>
    <scope>NUCLEOTIDE SEQUENCE [LARGE SCALE GENOMIC DNA]</scope>
    <source>
        <strain>ATCC 700532 / DSM 15464 / FAM18</strain>
    </source>
</reference>
<organism>
    <name type="scientific">Neisseria meningitidis serogroup C / serotype 2a (strain ATCC 700532 / DSM 15464 / FAM18)</name>
    <dbReference type="NCBI Taxonomy" id="272831"/>
    <lineage>
        <taxon>Bacteria</taxon>
        <taxon>Pseudomonadati</taxon>
        <taxon>Pseudomonadota</taxon>
        <taxon>Betaproteobacteria</taxon>
        <taxon>Neisseriales</taxon>
        <taxon>Neisseriaceae</taxon>
        <taxon>Neisseria</taxon>
    </lineage>
</organism>
<keyword id="KW-0687">Ribonucleoprotein</keyword>
<keyword id="KW-0689">Ribosomal protein</keyword>
<comment type="similarity">
    <text evidence="1">Belongs to the bacterial ribosomal protein bL27 family.</text>
</comment>
<name>RL27_NEIMF</name>
<feature type="chain" id="PRO_1000017527" description="Large ribosomal subunit protein bL27">
    <location>
        <begin position="1"/>
        <end position="90"/>
    </location>
</feature>
<feature type="region of interest" description="Disordered" evidence="2">
    <location>
        <begin position="1"/>
        <end position="21"/>
    </location>
</feature>
<sequence>MASKKAGGSTRNGRDSEAKRLGVKAYGNELIPAGSIIVRQRGTKFHAGDNVGMGKDHTLFAKVDGYVEFKTKGALNRKTVSIRPYTGSEE</sequence>
<accession>A1KVV9</accession>